<comment type="function">
    <text evidence="1">Catalyzes the last two sequential reactions in the de novo biosynthetic pathway for UDP-N-acetylglucosamine (UDP-GlcNAc). The C-terminal domain catalyzes the transfer of acetyl group from acetyl coenzyme A to glucosamine-1-phosphate (GlcN-1-P) to produce N-acetylglucosamine-1-phosphate (GlcNAc-1-P), which is converted into UDP-GlcNAc by the transfer of uridine 5-monophosphate (from uridine 5-triphosphate), a reaction catalyzed by the N-terminal domain.</text>
</comment>
<comment type="catalytic activity">
    <reaction evidence="1">
        <text>alpha-D-glucosamine 1-phosphate + acetyl-CoA = N-acetyl-alpha-D-glucosamine 1-phosphate + CoA + H(+)</text>
        <dbReference type="Rhea" id="RHEA:13725"/>
        <dbReference type="ChEBI" id="CHEBI:15378"/>
        <dbReference type="ChEBI" id="CHEBI:57287"/>
        <dbReference type="ChEBI" id="CHEBI:57288"/>
        <dbReference type="ChEBI" id="CHEBI:57776"/>
        <dbReference type="ChEBI" id="CHEBI:58516"/>
        <dbReference type="EC" id="2.3.1.157"/>
    </reaction>
</comment>
<comment type="catalytic activity">
    <reaction evidence="1">
        <text>N-acetyl-alpha-D-glucosamine 1-phosphate + UTP + H(+) = UDP-N-acetyl-alpha-D-glucosamine + diphosphate</text>
        <dbReference type="Rhea" id="RHEA:13509"/>
        <dbReference type="ChEBI" id="CHEBI:15378"/>
        <dbReference type="ChEBI" id="CHEBI:33019"/>
        <dbReference type="ChEBI" id="CHEBI:46398"/>
        <dbReference type="ChEBI" id="CHEBI:57705"/>
        <dbReference type="ChEBI" id="CHEBI:57776"/>
        <dbReference type="EC" id="2.7.7.23"/>
    </reaction>
</comment>
<comment type="cofactor">
    <cofactor evidence="1">
        <name>Mg(2+)</name>
        <dbReference type="ChEBI" id="CHEBI:18420"/>
    </cofactor>
    <text evidence="1">Binds 1 Mg(2+) ion per subunit.</text>
</comment>
<comment type="pathway">
    <text evidence="1">Nucleotide-sugar biosynthesis; UDP-N-acetyl-alpha-D-glucosamine biosynthesis; N-acetyl-alpha-D-glucosamine 1-phosphate from alpha-D-glucosamine 6-phosphate (route II): step 2/2.</text>
</comment>
<comment type="pathway">
    <text evidence="1">Nucleotide-sugar biosynthesis; UDP-N-acetyl-alpha-D-glucosamine biosynthesis; UDP-N-acetyl-alpha-D-glucosamine from N-acetyl-alpha-D-glucosamine 1-phosphate: step 1/1.</text>
</comment>
<comment type="pathway">
    <text evidence="1">Bacterial outer membrane biogenesis; LPS lipid A biosynthesis.</text>
</comment>
<comment type="subunit">
    <text evidence="1">Homotrimer.</text>
</comment>
<comment type="subcellular location">
    <subcellularLocation>
        <location evidence="1">Cytoplasm</location>
    </subcellularLocation>
</comment>
<comment type="similarity">
    <text evidence="1">In the N-terminal section; belongs to the N-acetylglucosamine-1-phosphate uridyltransferase family.</text>
</comment>
<comment type="similarity">
    <text evidence="1">In the C-terminal section; belongs to the transferase hexapeptide repeat family.</text>
</comment>
<proteinExistence type="inferred from homology"/>
<feature type="chain" id="PRO_1000056194" description="Bifunctional protein GlmU">
    <location>
        <begin position="1"/>
        <end position="454"/>
    </location>
</feature>
<feature type="region of interest" description="Pyrophosphorylase" evidence="1">
    <location>
        <begin position="1"/>
        <end position="226"/>
    </location>
</feature>
<feature type="region of interest" description="Linker" evidence="1">
    <location>
        <begin position="227"/>
        <end position="247"/>
    </location>
</feature>
<feature type="region of interest" description="N-acetyltransferase" evidence="1">
    <location>
        <begin position="248"/>
        <end position="454"/>
    </location>
</feature>
<feature type="active site" description="Proton acceptor" evidence="1">
    <location>
        <position position="360"/>
    </location>
</feature>
<feature type="binding site" evidence="1">
    <location>
        <begin position="8"/>
        <end position="11"/>
    </location>
    <ligand>
        <name>UDP-N-acetyl-alpha-D-glucosamine</name>
        <dbReference type="ChEBI" id="CHEBI:57705"/>
    </ligand>
</feature>
<feature type="binding site" evidence="1">
    <location>
        <position position="22"/>
    </location>
    <ligand>
        <name>UDP-N-acetyl-alpha-D-glucosamine</name>
        <dbReference type="ChEBI" id="CHEBI:57705"/>
    </ligand>
</feature>
<feature type="binding site" evidence="1">
    <location>
        <position position="73"/>
    </location>
    <ligand>
        <name>UDP-N-acetyl-alpha-D-glucosamine</name>
        <dbReference type="ChEBI" id="CHEBI:57705"/>
    </ligand>
</feature>
<feature type="binding site" evidence="1">
    <location>
        <begin position="78"/>
        <end position="79"/>
    </location>
    <ligand>
        <name>UDP-N-acetyl-alpha-D-glucosamine</name>
        <dbReference type="ChEBI" id="CHEBI:57705"/>
    </ligand>
</feature>
<feature type="binding site" evidence="1">
    <location>
        <begin position="100"/>
        <end position="102"/>
    </location>
    <ligand>
        <name>UDP-N-acetyl-alpha-D-glucosamine</name>
        <dbReference type="ChEBI" id="CHEBI:57705"/>
    </ligand>
</feature>
<feature type="binding site" evidence="1">
    <location>
        <position position="102"/>
    </location>
    <ligand>
        <name>Mg(2+)</name>
        <dbReference type="ChEBI" id="CHEBI:18420"/>
    </ligand>
</feature>
<feature type="binding site" evidence="1">
    <location>
        <position position="137"/>
    </location>
    <ligand>
        <name>UDP-N-acetyl-alpha-D-glucosamine</name>
        <dbReference type="ChEBI" id="CHEBI:57705"/>
    </ligand>
</feature>
<feature type="binding site" evidence="1">
    <location>
        <position position="151"/>
    </location>
    <ligand>
        <name>UDP-N-acetyl-alpha-D-glucosamine</name>
        <dbReference type="ChEBI" id="CHEBI:57705"/>
    </ligand>
</feature>
<feature type="binding site" evidence="1">
    <location>
        <position position="166"/>
    </location>
    <ligand>
        <name>UDP-N-acetyl-alpha-D-glucosamine</name>
        <dbReference type="ChEBI" id="CHEBI:57705"/>
    </ligand>
</feature>
<feature type="binding site" evidence="1">
    <location>
        <position position="224"/>
    </location>
    <ligand>
        <name>Mg(2+)</name>
        <dbReference type="ChEBI" id="CHEBI:18420"/>
    </ligand>
</feature>
<feature type="binding site" evidence="1">
    <location>
        <position position="224"/>
    </location>
    <ligand>
        <name>UDP-N-acetyl-alpha-D-glucosamine</name>
        <dbReference type="ChEBI" id="CHEBI:57705"/>
    </ligand>
</feature>
<feature type="binding site" evidence="1">
    <location>
        <position position="330"/>
    </location>
    <ligand>
        <name>UDP-N-acetyl-alpha-D-glucosamine</name>
        <dbReference type="ChEBI" id="CHEBI:57705"/>
    </ligand>
</feature>
<feature type="binding site" evidence="1">
    <location>
        <position position="348"/>
    </location>
    <ligand>
        <name>UDP-N-acetyl-alpha-D-glucosamine</name>
        <dbReference type="ChEBI" id="CHEBI:57705"/>
    </ligand>
</feature>
<feature type="binding site" evidence="1">
    <location>
        <position position="363"/>
    </location>
    <ligand>
        <name>UDP-N-acetyl-alpha-D-glucosamine</name>
        <dbReference type="ChEBI" id="CHEBI:57705"/>
    </ligand>
</feature>
<feature type="binding site" evidence="1">
    <location>
        <position position="374"/>
    </location>
    <ligand>
        <name>UDP-N-acetyl-alpha-D-glucosamine</name>
        <dbReference type="ChEBI" id="CHEBI:57705"/>
    </ligand>
</feature>
<feature type="binding site" evidence="1">
    <location>
        <position position="377"/>
    </location>
    <ligand>
        <name>acetyl-CoA</name>
        <dbReference type="ChEBI" id="CHEBI:57288"/>
    </ligand>
</feature>
<feature type="binding site" evidence="1">
    <location>
        <begin position="383"/>
        <end position="384"/>
    </location>
    <ligand>
        <name>acetyl-CoA</name>
        <dbReference type="ChEBI" id="CHEBI:57288"/>
    </ligand>
</feature>
<feature type="binding site" evidence="1">
    <location>
        <position position="402"/>
    </location>
    <ligand>
        <name>acetyl-CoA</name>
        <dbReference type="ChEBI" id="CHEBI:57288"/>
    </ligand>
</feature>
<feature type="binding site" evidence="1">
    <location>
        <position position="420"/>
    </location>
    <ligand>
        <name>acetyl-CoA</name>
        <dbReference type="ChEBI" id="CHEBI:57288"/>
    </ligand>
</feature>
<feature type="binding site" evidence="1">
    <location>
        <position position="437"/>
    </location>
    <ligand>
        <name>acetyl-CoA</name>
        <dbReference type="ChEBI" id="CHEBI:57288"/>
    </ligand>
</feature>
<reference key="1">
    <citation type="submission" date="2006-12" db="EMBL/GenBank/DDBJ databases">
        <title>Complete sequence of Shewanella amazonensis SB2B.</title>
        <authorList>
            <consortium name="US DOE Joint Genome Institute"/>
            <person name="Copeland A."/>
            <person name="Lucas S."/>
            <person name="Lapidus A."/>
            <person name="Barry K."/>
            <person name="Detter J.C."/>
            <person name="Glavina del Rio T."/>
            <person name="Hammon N."/>
            <person name="Israni S."/>
            <person name="Dalin E."/>
            <person name="Tice H."/>
            <person name="Pitluck S."/>
            <person name="Munk A.C."/>
            <person name="Brettin T."/>
            <person name="Bruce D."/>
            <person name="Han C."/>
            <person name="Tapia R."/>
            <person name="Gilna P."/>
            <person name="Schmutz J."/>
            <person name="Larimer F."/>
            <person name="Land M."/>
            <person name="Hauser L."/>
            <person name="Kyrpides N."/>
            <person name="Mikhailova N."/>
            <person name="Fredrickson J."/>
            <person name="Richardson P."/>
        </authorList>
    </citation>
    <scope>NUCLEOTIDE SEQUENCE [LARGE SCALE GENOMIC DNA]</scope>
    <source>
        <strain>ATCC BAA-1098 / SB2B</strain>
    </source>
</reference>
<gene>
    <name evidence="1" type="primary">glmU</name>
    <name type="ordered locus">Sama_3642</name>
</gene>
<accession>A1SBT8</accession>
<name>GLMU_SHEAM</name>
<dbReference type="EC" id="2.7.7.23" evidence="1"/>
<dbReference type="EC" id="2.3.1.157" evidence="1"/>
<dbReference type="EMBL" id="CP000507">
    <property type="protein sequence ID" value="ABM01845.1"/>
    <property type="molecule type" value="Genomic_DNA"/>
</dbReference>
<dbReference type="RefSeq" id="WP_011761748.1">
    <property type="nucleotide sequence ID" value="NC_008700.1"/>
</dbReference>
<dbReference type="SMR" id="A1SBT8"/>
<dbReference type="STRING" id="326297.Sama_3642"/>
<dbReference type="KEGG" id="saz:Sama_3642"/>
<dbReference type="eggNOG" id="COG1207">
    <property type="taxonomic scope" value="Bacteria"/>
</dbReference>
<dbReference type="HOGENOM" id="CLU_029499_15_2_6"/>
<dbReference type="OrthoDB" id="9775031at2"/>
<dbReference type="UniPathway" id="UPA00113">
    <property type="reaction ID" value="UER00532"/>
</dbReference>
<dbReference type="UniPathway" id="UPA00113">
    <property type="reaction ID" value="UER00533"/>
</dbReference>
<dbReference type="UniPathway" id="UPA00973"/>
<dbReference type="Proteomes" id="UP000009175">
    <property type="component" value="Chromosome"/>
</dbReference>
<dbReference type="GO" id="GO:0005737">
    <property type="term" value="C:cytoplasm"/>
    <property type="evidence" value="ECO:0007669"/>
    <property type="project" value="UniProtKB-SubCell"/>
</dbReference>
<dbReference type="GO" id="GO:0016020">
    <property type="term" value="C:membrane"/>
    <property type="evidence" value="ECO:0007669"/>
    <property type="project" value="GOC"/>
</dbReference>
<dbReference type="GO" id="GO:0019134">
    <property type="term" value="F:glucosamine-1-phosphate N-acetyltransferase activity"/>
    <property type="evidence" value="ECO:0007669"/>
    <property type="project" value="UniProtKB-UniRule"/>
</dbReference>
<dbReference type="GO" id="GO:0000287">
    <property type="term" value="F:magnesium ion binding"/>
    <property type="evidence" value="ECO:0007669"/>
    <property type="project" value="UniProtKB-UniRule"/>
</dbReference>
<dbReference type="GO" id="GO:0003977">
    <property type="term" value="F:UDP-N-acetylglucosamine diphosphorylase activity"/>
    <property type="evidence" value="ECO:0007669"/>
    <property type="project" value="UniProtKB-UniRule"/>
</dbReference>
<dbReference type="GO" id="GO:0000902">
    <property type="term" value="P:cell morphogenesis"/>
    <property type="evidence" value="ECO:0007669"/>
    <property type="project" value="UniProtKB-UniRule"/>
</dbReference>
<dbReference type="GO" id="GO:0071555">
    <property type="term" value="P:cell wall organization"/>
    <property type="evidence" value="ECO:0007669"/>
    <property type="project" value="UniProtKB-KW"/>
</dbReference>
<dbReference type="GO" id="GO:0009245">
    <property type="term" value="P:lipid A biosynthetic process"/>
    <property type="evidence" value="ECO:0007669"/>
    <property type="project" value="UniProtKB-UniRule"/>
</dbReference>
<dbReference type="GO" id="GO:0009252">
    <property type="term" value="P:peptidoglycan biosynthetic process"/>
    <property type="evidence" value="ECO:0007669"/>
    <property type="project" value="UniProtKB-UniRule"/>
</dbReference>
<dbReference type="GO" id="GO:0008360">
    <property type="term" value="P:regulation of cell shape"/>
    <property type="evidence" value="ECO:0007669"/>
    <property type="project" value="UniProtKB-KW"/>
</dbReference>
<dbReference type="GO" id="GO:0006048">
    <property type="term" value="P:UDP-N-acetylglucosamine biosynthetic process"/>
    <property type="evidence" value="ECO:0007669"/>
    <property type="project" value="UniProtKB-UniPathway"/>
</dbReference>
<dbReference type="CDD" id="cd02540">
    <property type="entry name" value="GT2_GlmU_N_bac"/>
    <property type="match status" value="1"/>
</dbReference>
<dbReference type="CDD" id="cd03353">
    <property type="entry name" value="LbH_GlmU_C"/>
    <property type="match status" value="1"/>
</dbReference>
<dbReference type="Gene3D" id="2.160.10.10">
    <property type="entry name" value="Hexapeptide repeat proteins"/>
    <property type="match status" value="1"/>
</dbReference>
<dbReference type="Gene3D" id="3.90.550.10">
    <property type="entry name" value="Spore Coat Polysaccharide Biosynthesis Protein SpsA, Chain A"/>
    <property type="match status" value="1"/>
</dbReference>
<dbReference type="HAMAP" id="MF_01631">
    <property type="entry name" value="GlmU"/>
    <property type="match status" value="1"/>
</dbReference>
<dbReference type="InterPro" id="IPR005882">
    <property type="entry name" value="Bifunctional_GlmU"/>
</dbReference>
<dbReference type="InterPro" id="IPR050065">
    <property type="entry name" value="GlmU-like"/>
</dbReference>
<dbReference type="InterPro" id="IPR038009">
    <property type="entry name" value="GlmU_C_LbH"/>
</dbReference>
<dbReference type="InterPro" id="IPR001451">
    <property type="entry name" value="Hexapep"/>
</dbReference>
<dbReference type="InterPro" id="IPR025877">
    <property type="entry name" value="MobA-like_NTP_Trfase"/>
</dbReference>
<dbReference type="InterPro" id="IPR029044">
    <property type="entry name" value="Nucleotide-diphossugar_trans"/>
</dbReference>
<dbReference type="InterPro" id="IPR011004">
    <property type="entry name" value="Trimer_LpxA-like_sf"/>
</dbReference>
<dbReference type="NCBIfam" id="TIGR01173">
    <property type="entry name" value="glmU"/>
    <property type="match status" value="1"/>
</dbReference>
<dbReference type="NCBIfam" id="NF006986">
    <property type="entry name" value="PRK09451.1"/>
    <property type="match status" value="1"/>
</dbReference>
<dbReference type="PANTHER" id="PTHR43584:SF3">
    <property type="entry name" value="BIFUNCTIONAL PROTEIN GLMU"/>
    <property type="match status" value="1"/>
</dbReference>
<dbReference type="PANTHER" id="PTHR43584">
    <property type="entry name" value="NUCLEOTIDYL TRANSFERASE"/>
    <property type="match status" value="1"/>
</dbReference>
<dbReference type="Pfam" id="PF00132">
    <property type="entry name" value="Hexapep"/>
    <property type="match status" value="1"/>
</dbReference>
<dbReference type="Pfam" id="PF12804">
    <property type="entry name" value="NTP_transf_3"/>
    <property type="match status" value="1"/>
</dbReference>
<dbReference type="SUPFAM" id="SSF53448">
    <property type="entry name" value="Nucleotide-diphospho-sugar transferases"/>
    <property type="match status" value="1"/>
</dbReference>
<dbReference type="SUPFAM" id="SSF51161">
    <property type="entry name" value="Trimeric LpxA-like enzymes"/>
    <property type="match status" value="1"/>
</dbReference>
<keyword id="KW-0012">Acyltransferase</keyword>
<keyword id="KW-0133">Cell shape</keyword>
<keyword id="KW-0961">Cell wall biogenesis/degradation</keyword>
<keyword id="KW-0963">Cytoplasm</keyword>
<keyword id="KW-0460">Magnesium</keyword>
<keyword id="KW-0479">Metal-binding</keyword>
<keyword id="KW-0511">Multifunctional enzyme</keyword>
<keyword id="KW-0548">Nucleotidyltransferase</keyword>
<keyword id="KW-0573">Peptidoglycan synthesis</keyword>
<keyword id="KW-1185">Reference proteome</keyword>
<keyword id="KW-0677">Repeat</keyword>
<keyword id="KW-0808">Transferase</keyword>
<evidence type="ECO:0000255" key="1">
    <source>
        <dbReference type="HAMAP-Rule" id="MF_01631"/>
    </source>
</evidence>
<protein>
    <recommendedName>
        <fullName evidence="1">Bifunctional protein GlmU</fullName>
    </recommendedName>
    <domain>
        <recommendedName>
            <fullName evidence="1">UDP-N-acetylglucosamine pyrophosphorylase</fullName>
            <ecNumber evidence="1">2.7.7.23</ecNumber>
        </recommendedName>
        <alternativeName>
            <fullName evidence="1">N-acetylglucosamine-1-phosphate uridyltransferase</fullName>
        </alternativeName>
    </domain>
    <domain>
        <recommendedName>
            <fullName evidence="1">Glucosamine-1-phosphate N-acetyltransferase</fullName>
            <ecNumber evidence="1">2.3.1.157</ecNumber>
        </recommendedName>
    </domain>
</protein>
<organism>
    <name type="scientific">Shewanella amazonensis (strain ATCC BAA-1098 / SB2B)</name>
    <dbReference type="NCBI Taxonomy" id="326297"/>
    <lineage>
        <taxon>Bacteria</taxon>
        <taxon>Pseudomonadati</taxon>
        <taxon>Pseudomonadota</taxon>
        <taxon>Gammaproteobacteria</taxon>
        <taxon>Alteromonadales</taxon>
        <taxon>Shewanellaceae</taxon>
        <taxon>Shewanella</taxon>
    </lineage>
</organism>
<sequence length="454" mass="48451">MSLNVVILAAGKGTRMRSDLPKVLHSVAHKPMVQHVIDTARELNADNINLVYGYGGELLKAKLGEQPLNFVLQAEQLGTGHAVAQAIDHINDEDTVLVLYGDVPLTRKETLEALLAARQPDGVAVLTVHLDNPTGYGRMVREGGKVVGIVEQKDASPEQLKINEINSGIMALPGKRLKAWLGRLENNNAQGEFYLTDVIAMAHADGVAIDTAHPANPIETEGANNRVQLAALERAYQARRAEELMLAGANLRDPARIDIRGDVTVGMDVMIDVNVIFEGTVKLGNNVTIGAGAILIDCDIADNADIKPYSIIEGAKLGDSASAGPFARLRPGAELHKDAHIGNFVEMKKAVLGEGSKAGHLAYLGDAEIGKGVNIGAGTITCNYDGANKHLTVIEDNVFVGSDTQLVAPVVIRKGATLGAGSTVTHEVGENELVITRVKQRHIQGWQRPVKKPK</sequence>